<evidence type="ECO:0000255" key="1"/>
<evidence type="ECO:0000269" key="2">
    <source>
    </source>
</evidence>
<evidence type="ECO:0000303" key="3">
    <source>
    </source>
</evidence>
<evidence type="ECO:0000305" key="4"/>
<evidence type="ECO:0000305" key="5">
    <source>
    </source>
</evidence>
<evidence type="ECO:0000312" key="6">
    <source>
        <dbReference type="EMBL" id="BAA18143.1"/>
    </source>
</evidence>
<dbReference type="EMBL" id="BA000022">
    <property type="protein sequence ID" value="BAA18143.1"/>
    <property type="molecule type" value="Genomic_DNA"/>
</dbReference>
<dbReference type="PIR" id="S75582">
    <property type="entry name" value="S75582"/>
</dbReference>
<dbReference type="SMR" id="P74067"/>
<dbReference type="STRING" id="1148.gene:10499015"/>
<dbReference type="PaxDb" id="1148-1653227"/>
<dbReference type="EnsemblBacteria" id="BAA18143">
    <property type="protein sequence ID" value="BAA18143"/>
    <property type="gene ID" value="BAA18143"/>
</dbReference>
<dbReference type="KEGG" id="syn:ssl1498"/>
<dbReference type="eggNOG" id="ENOG5032ZUJ">
    <property type="taxonomic scope" value="Bacteria"/>
</dbReference>
<dbReference type="InParanoid" id="P74067"/>
<dbReference type="Proteomes" id="UP000001425">
    <property type="component" value="Chromosome"/>
</dbReference>
<dbReference type="GO" id="GO:0009523">
    <property type="term" value="C:photosystem II"/>
    <property type="evidence" value="ECO:0007669"/>
    <property type="project" value="UniProtKB-KW"/>
</dbReference>
<dbReference type="GO" id="GO:0031676">
    <property type="term" value="C:plasma membrane-derived thylakoid membrane"/>
    <property type="evidence" value="ECO:0007669"/>
    <property type="project" value="UniProtKB-SubCell"/>
</dbReference>
<dbReference type="GO" id="GO:0010207">
    <property type="term" value="P:photosystem II assembly"/>
    <property type="evidence" value="ECO:0000315"/>
    <property type="project" value="UniProtKB"/>
</dbReference>
<dbReference type="InterPro" id="IPR048028">
    <property type="entry name" value="Psb34-like"/>
</dbReference>
<dbReference type="NCBIfam" id="NF033486">
    <property type="entry name" value="harvest_ssl1498"/>
    <property type="match status" value="1"/>
</dbReference>
<feature type="chain" id="PRO_0000459052" description="Photosystem II assembly protein Psb34">
    <location>
        <begin position="1"/>
        <end position="61"/>
    </location>
</feature>
<feature type="transmembrane region" description="Helical" evidence="1">
    <location>
        <begin position="36"/>
        <end position="56"/>
    </location>
</feature>
<sequence length="61" mass="6399">MNNYTKDDDGRLNNFAVEPKIYAADAPSKADKRNYLIMAAITVVLVAGLIAVAVVASGAST</sequence>
<protein>
    <recommendedName>
        <fullName evidence="3">Photosystem II assembly protein Psb34</fullName>
    </recommendedName>
</protein>
<gene>
    <name evidence="3" type="primary">psb34</name>
    <name evidence="6" type="ordered locus">ssl1498</name>
</gene>
<keyword id="KW-0472">Membrane</keyword>
<keyword id="KW-0602">Photosynthesis</keyword>
<keyword id="KW-0604">Photosystem II</keyword>
<keyword id="KW-1185">Reference proteome</keyword>
<keyword id="KW-0793">Thylakoid</keyword>
<keyword id="KW-0812">Transmembrane</keyword>
<keyword id="KW-1133">Transmembrane helix</keyword>
<name>PSB34_SYNY3</name>
<proteinExistence type="evidence at protein level"/>
<accession>P74067</accession>
<organism>
    <name type="scientific">Synechocystis sp. (strain ATCC 27184 / PCC 6803 / Kazusa)</name>
    <dbReference type="NCBI Taxonomy" id="1111708"/>
    <lineage>
        <taxon>Bacteria</taxon>
        <taxon>Bacillati</taxon>
        <taxon>Cyanobacteriota</taxon>
        <taxon>Cyanophyceae</taxon>
        <taxon>Synechococcales</taxon>
        <taxon>Merismopediaceae</taxon>
        <taxon>Synechocystis</taxon>
    </lineage>
</organism>
<comment type="function">
    <text evidence="2 5">Involved in photosystem II (PSII) assembly and/or repair (PubMed:35279779). Probably involved in conversion of late PSII assembly intermediates into mature dimeric PSII, it may mediate the optimal equlibrium of HliA/HliB among the intermediates containing CP47 (psbB) to facilitate photoprotection during assembly (Probable) (PubMed:35279779).</text>
</comment>
<comment type="subunit">
    <text evidence="2 5">Part of the photosystem II (PSII) assembly intermediate RC47 complex (with D1, D2, CP47, PsbE, PsbF, PsbH, Psb27 and Psb28); minor amounts are found in other PSII complexes, including mature, dimeric PSII with PsbO and PsbV. No HliA or HliB are detected in any of these complexes. Its interaction with PSII requires both CP47 (psbB) and PsbH (PubMed:35279779). HliA/HliB and Psb34 probably bind to a similar site on CP47; their binding seems to be mutually exclusive (Probable) (PubMed:35279779).</text>
</comment>
<comment type="subcellular location">
    <subcellularLocation>
        <location evidence="5">Cellular thylakoid membrane</location>
        <topology evidence="1">Single-pass membrane protein</topology>
    </subcellularLocation>
</comment>
<comment type="induction">
    <text evidence="2">Expressed under normal light (40 umol photons/m(2)/s); less is made under high light (500 umol photons/m(2)/s), which disappears after 2 hours (at protein level) (PubMed:35279779).</text>
</comment>
<comment type="disruption phenotype">
    <text evidence="2">Normal growth, photosystem ratio and O(2) evolution under all tested light regimes. Greatly increased levels of HliA and HliB are detected in monomeric PSII in normal light (40 umol photons/m(2)/s). High levels of HliA and HliB are visible at all times during growth in high light (500 umol photons/m(2)/s). A double hliA-psb34 deletion has high levels of HliB even at 24 hours, grows very poorly under intermittant light (5 minutes 500 umol photons/m(2)/s and 5 minutes dark for 8 days) (PubMed:35279779).</text>
</comment>
<comment type="similarity">
    <text evidence="4">Belongs to the Psb34 family.</text>
</comment>
<reference evidence="6" key="1">
    <citation type="journal article" date="1996" name="DNA Res.">
        <title>Sequence analysis of the genome of the unicellular cyanobacterium Synechocystis sp. strain PCC6803. II. Sequence determination of the entire genome and assignment of potential protein-coding regions.</title>
        <authorList>
            <person name="Kaneko T."/>
            <person name="Sato S."/>
            <person name="Kotani H."/>
            <person name="Tanaka A."/>
            <person name="Asamizu E."/>
            <person name="Nakamura Y."/>
            <person name="Miyajima N."/>
            <person name="Hirosawa M."/>
            <person name="Sugiura M."/>
            <person name="Sasamoto S."/>
            <person name="Kimura T."/>
            <person name="Hosouchi T."/>
            <person name="Matsuno A."/>
            <person name="Muraki A."/>
            <person name="Nakazaki N."/>
            <person name="Naruo K."/>
            <person name="Okumura S."/>
            <person name="Shimpo S."/>
            <person name="Takeuchi C."/>
            <person name="Wada T."/>
            <person name="Watanabe A."/>
            <person name="Yamada M."/>
            <person name="Yasuda M."/>
            <person name="Tabata S."/>
        </authorList>
    </citation>
    <scope>NUCLEOTIDE SEQUENCE [LARGE SCALE GENOMIC DNA]</scope>
    <source>
        <strain>ATCC 27184 / PCC 6803 / Kazusa</strain>
    </source>
</reference>
<reference key="2">
    <citation type="journal article" date="2022" name="Photosyn. Res.">
        <title>Psb34 protein modulates binding of high-light-inducible proteins to CP47-containing photosystem II assembly intermediates in the cyanobacterium Synechocystis sp. PCC 6803.</title>
        <authorList>
            <person name="Rahimzadeh-Karvansara P."/>
            <person name="Pascual-Aznar G."/>
            <person name="Beckova M."/>
            <person name="Komenda J."/>
        </authorList>
    </citation>
    <scope>IDENTIFICATION BY MASS SPECTROMETRY</scope>
    <scope>FUNCTION</scope>
    <scope>SUBUNIT</scope>
    <scope>SUBCELLULAR LOCATION</scope>
    <scope>INDUCTION</scope>
    <scope>DISRUPTION PHENOTYPE</scope>
    <source>
        <strain>ATCC 27184 / PCC 6803 / Kazusa</strain>
    </source>
</reference>